<name>PA2A_BOTER</name>
<keyword id="KW-0106">Calcium</keyword>
<keyword id="KW-0903">Direct protein sequencing</keyword>
<keyword id="KW-1015">Disulfide bond</keyword>
<keyword id="KW-1199">Hemostasis impairing toxin</keyword>
<keyword id="KW-0378">Hydrolase</keyword>
<keyword id="KW-0442">Lipid degradation</keyword>
<keyword id="KW-0443">Lipid metabolism</keyword>
<keyword id="KW-0479">Metal-binding</keyword>
<keyword id="KW-1201">Platelet aggregation inhibiting toxin</keyword>
<keyword id="KW-0964">Secreted</keyword>
<keyword id="KW-0732">Signal</keyword>
<keyword id="KW-0800">Toxin</keyword>
<feature type="signal peptide" evidence="6">
    <location>
        <begin position="1"/>
        <end position="16"/>
    </location>
</feature>
<feature type="chain" id="PRO_5000141191" description="Acidic phospholipase A2 BE-I-PLA2">
    <location>
        <begin position="17"/>
        <end position="138"/>
    </location>
</feature>
<feature type="active site" evidence="3">
    <location>
        <position position="63"/>
    </location>
</feature>
<feature type="active site" evidence="3">
    <location>
        <position position="105"/>
    </location>
</feature>
<feature type="binding site" evidence="2">
    <location>
        <position position="43"/>
    </location>
    <ligand>
        <name>Ca(2+)</name>
        <dbReference type="ChEBI" id="CHEBI:29108"/>
    </ligand>
</feature>
<feature type="binding site" evidence="2">
    <location>
        <position position="45"/>
    </location>
    <ligand>
        <name>Ca(2+)</name>
        <dbReference type="ChEBI" id="CHEBI:29108"/>
    </ligand>
</feature>
<feature type="binding site" evidence="2">
    <location>
        <position position="47"/>
    </location>
    <ligand>
        <name>Ca(2+)</name>
        <dbReference type="ChEBI" id="CHEBI:29108"/>
    </ligand>
</feature>
<feature type="binding site" evidence="2">
    <location>
        <position position="64"/>
    </location>
    <ligand>
        <name>Ca(2+)</name>
        <dbReference type="ChEBI" id="CHEBI:29108"/>
    </ligand>
</feature>
<feature type="disulfide bond" evidence="2">
    <location>
        <begin position="42"/>
        <end position="131"/>
    </location>
</feature>
<feature type="disulfide bond" evidence="2">
    <location>
        <begin position="44"/>
        <end position="60"/>
    </location>
</feature>
<feature type="disulfide bond" evidence="2">
    <location>
        <begin position="59"/>
        <end position="111"/>
    </location>
</feature>
<feature type="disulfide bond" evidence="2">
    <location>
        <begin position="65"/>
        <end position="138"/>
    </location>
</feature>
<feature type="disulfide bond" evidence="2">
    <location>
        <begin position="66"/>
        <end position="104"/>
    </location>
</feature>
<feature type="disulfide bond" evidence="2">
    <location>
        <begin position="73"/>
        <end position="97"/>
    </location>
</feature>
<feature type="disulfide bond" evidence="2">
    <location>
        <begin position="91"/>
        <end position="102"/>
    </location>
</feature>
<evidence type="ECO:0000250" key="1"/>
<evidence type="ECO:0000250" key="2">
    <source>
        <dbReference type="UniProtKB" id="O42191"/>
    </source>
</evidence>
<evidence type="ECO:0000250" key="3">
    <source>
        <dbReference type="UniProtKB" id="P06859"/>
    </source>
</evidence>
<evidence type="ECO:0000255" key="4">
    <source>
        <dbReference type="PROSITE-ProRule" id="PRU10035"/>
    </source>
</evidence>
<evidence type="ECO:0000255" key="5">
    <source>
        <dbReference type="PROSITE-ProRule" id="PRU10036"/>
    </source>
</evidence>
<evidence type="ECO:0000269" key="6">
    <source>
    </source>
</evidence>
<evidence type="ECO:0000305" key="7"/>
<evidence type="ECO:0000305" key="8">
    <source>
    </source>
</evidence>
<proteinExistence type="evidence at protein level"/>
<dbReference type="EC" id="3.1.1.4"/>
<dbReference type="EMBL" id="DQ359953">
    <property type="protein sequence ID" value="ABC96692.1"/>
    <property type="molecule type" value="mRNA"/>
</dbReference>
<dbReference type="SMR" id="Q2HZ28"/>
<dbReference type="GO" id="GO:0005576">
    <property type="term" value="C:extracellular region"/>
    <property type="evidence" value="ECO:0007669"/>
    <property type="project" value="UniProtKB-SubCell"/>
</dbReference>
<dbReference type="GO" id="GO:0005509">
    <property type="term" value="F:calcium ion binding"/>
    <property type="evidence" value="ECO:0007669"/>
    <property type="project" value="InterPro"/>
</dbReference>
<dbReference type="GO" id="GO:0047498">
    <property type="term" value="F:calcium-dependent phospholipase A2 activity"/>
    <property type="evidence" value="ECO:0007669"/>
    <property type="project" value="TreeGrafter"/>
</dbReference>
<dbReference type="GO" id="GO:0005543">
    <property type="term" value="F:phospholipid binding"/>
    <property type="evidence" value="ECO:0007669"/>
    <property type="project" value="TreeGrafter"/>
</dbReference>
<dbReference type="GO" id="GO:0090729">
    <property type="term" value="F:toxin activity"/>
    <property type="evidence" value="ECO:0007669"/>
    <property type="project" value="UniProtKB-KW"/>
</dbReference>
<dbReference type="GO" id="GO:0050482">
    <property type="term" value="P:arachidonate secretion"/>
    <property type="evidence" value="ECO:0007669"/>
    <property type="project" value="InterPro"/>
</dbReference>
<dbReference type="GO" id="GO:0016042">
    <property type="term" value="P:lipid catabolic process"/>
    <property type="evidence" value="ECO:0007669"/>
    <property type="project" value="UniProtKB-KW"/>
</dbReference>
<dbReference type="GO" id="GO:0042130">
    <property type="term" value="P:negative regulation of T cell proliferation"/>
    <property type="evidence" value="ECO:0007669"/>
    <property type="project" value="TreeGrafter"/>
</dbReference>
<dbReference type="GO" id="GO:0006644">
    <property type="term" value="P:phospholipid metabolic process"/>
    <property type="evidence" value="ECO:0007669"/>
    <property type="project" value="InterPro"/>
</dbReference>
<dbReference type="CDD" id="cd00125">
    <property type="entry name" value="PLA2c"/>
    <property type="match status" value="1"/>
</dbReference>
<dbReference type="FunFam" id="1.20.90.10:FF:000001">
    <property type="entry name" value="Basic phospholipase A2 homolog"/>
    <property type="match status" value="1"/>
</dbReference>
<dbReference type="Gene3D" id="1.20.90.10">
    <property type="entry name" value="Phospholipase A2 domain"/>
    <property type="match status" value="1"/>
</dbReference>
<dbReference type="InterPro" id="IPR001211">
    <property type="entry name" value="PLipase_A2"/>
</dbReference>
<dbReference type="InterPro" id="IPR033112">
    <property type="entry name" value="PLipase_A2_Asp_AS"/>
</dbReference>
<dbReference type="InterPro" id="IPR016090">
    <property type="entry name" value="PLipase_A2_dom"/>
</dbReference>
<dbReference type="InterPro" id="IPR036444">
    <property type="entry name" value="PLipase_A2_dom_sf"/>
</dbReference>
<dbReference type="InterPro" id="IPR033113">
    <property type="entry name" value="PLipase_A2_His_AS"/>
</dbReference>
<dbReference type="PANTHER" id="PTHR11716">
    <property type="entry name" value="PHOSPHOLIPASE A2 FAMILY MEMBER"/>
    <property type="match status" value="1"/>
</dbReference>
<dbReference type="PANTHER" id="PTHR11716:SF9">
    <property type="entry name" value="PHOSPHOLIPASE A2, MEMBRANE ASSOCIATED"/>
    <property type="match status" value="1"/>
</dbReference>
<dbReference type="Pfam" id="PF00068">
    <property type="entry name" value="Phospholip_A2_1"/>
    <property type="match status" value="1"/>
</dbReference>
<dbReference type="PRINTS" id="PR00389">
    <property type="entry name" value="PHPHLIPASEA2"/>
</dbReference>
<dbReference type="SMART" id="SM00085">
    <property type="entry name" value="PA2c"/>
    <property type="match status" value="1"/>
</dbReference>
<dbReference type="SUPFAM" id="SSF48619">
    <property type="entry name" value="Phospholipase A2, PLA2"/>
    <property type="match status" value="1"/>
</dbReference>
<dbReference type="PROSITE" id="PS00119">
    <property type="entry name" value="PA2_ASP"/>
    <property type="match status" value="1"/>
</dbReference>
<dbReference type="PROSITE" id="PS00118">
    <property type="entry name" value="PA2_HIS"/>
    <property type="match status" value="1"/>
</dbReference>
<accession>Q2HZ28</accession>
<protein>
    <recommendedName>
        <fullName>Acidic phospholipase A2 BE-I-PLA2</fullName>
        <shortName>svPLA2</shortName>
        <ecNumber>3.1.1.4</ecNumber>
    </recommendedName>
    <alternativeName>
        <fullName>Phosphatidylcholine 2-acylhydrolase</fullName>
    </alternativeName>
</protein>
<comment type="function">
    <text evidence="6">Snake venom phospholipase A2 that shows a potent inhibition of human platelet aggregation. This inhibition is concentration-dependent when aggregation is induced by collagen, and concentration-independent when aggregation is induced by arachidonic acid. In human umbilical-cord vein endothelial cells, this toxin stimulates endothelial cells to release prostaglandin I(2), suggesting an increase of its potential anti-platelet activity in vivo. PLA2 catalyzes the calcium-dependent hydrolysis of the 2-acyl groups in 3-sn-phosphoglycerides.</text>
</comment>
<comment type="catalytic activity">
    <reaction evidence="4 5">
        <text>a 1,2-diacyl-sn-glycero-3-phosphocholine + H2O = a 1-acyl-sn-glycero-3-phosphocholine + a fatty acid + H(+)</text>
        <dbReference type="Rhea" id="RHEA:15801"/>
        <dbReference type="ChEBI" id="CHEBI:15377"/>
        <dbReference type="ChEBI" id="CHEBI:15378"/>
        <dbReference type="ChEBI" id="CHEBI:28868"/>
        <dbReference type="ChEBI" id="CHEBI:57643"/>
        <dbReference type="ChEBI" id="CHEBI:58168"/>
        <dbReference type="EC" id="3.1.1.4"/>
    </reaction>
</comment>
<comment type="cofactor">
    <cofactor evidence="1">
        <name>Ca(2+)</name>
        <dbReference type="ChEBI" id="CHEBI:29108"/>
    </cofactor>
    <text evidence="1">Binds 1 Ca(2+) ion.</text>
</comment>
<comment type="subcellular location">
    <subcellularLocation>
        <location>Secreted</location>
    </subcellularLocation>
</comment>
<comment type="tissue specificity">
    <text>Expressed by the venom gland.</text>
</comment>
<comment type="mass spectrometry" mass="13649.57" method="MALDI" evidence="6"/>
<comment type="miscellaneous">
    <text evidence="8">Negative results: does not inhibit platelet aggregation when aggregation is induced by ADP, and does not induce aggregation of washed platelets. Does not induce changes on the principal platelet receptors (ITGA2, ITGA2B, GPIBA, SELP). In human umbilical-cord vein endothelial cells, does not induce detachment, does not interfere on nitric oxide release, and is neither apoptotic nor proliferative (PubMed:16750518).</text>
</comment>
<comment type="similarity">
    <text evidence="7">Belongs to the phospholipase A2 family. Group II subfamily. D49 sub-subfamily.</text>
</comment>
<sequence length="138" mass="15435">MRTLWIMAVLLVGVEGSLVQFETLIMKIAGRSGVWYYGSYGCYCGSGGQGRPQDASDRCCFVHDCCYGKVTDCDPKADVYTYSEENGVVVCGGDDPCKKQICECDRVAATCFRDNKDTYDNKYWFFPAKNCQEESEPC</sequence>
<reference key="1">
    <citation type="journal article" date="2006" name="Biochem. Pharmacol.">
        <title>BE-I-PLA2, a novel acidic phospholipase A2 from Bothrops erythromelas venom: isolation, cloning and characterization as potent anti-platelet and inductor of prostaglandin I2 release by endothelial cells.</title>
        <authorList>
            <person name="de Albuquerque Modesto J.C."/>
            <person name="Spencer P.J."/>
            <person name="Fritzen M."/>
            <person name="Valenca R.C."/>
            <person name="Oliva M.L."/>
            <person name="da Silva M.B."/>
            <person name="Chudzinski-Tavassi A.M."/>
            <person name="Guarnieri M.C."/>
        </authorList>
    </citation>
    <scope>NUCLEOTIDE SEQUENCE [MRNA]</scope>
    <scope>PROTEIN SEQUENCE OF 17-37; 78-91; 99-109 AND 122-131</scope>
    <scope>FUNCTION</scope>
    <scope>MASS SPECTROMETRY</scope>
    <source>
        <tissue>Venom</tissue>
        <tissue>Venom gland</tissue>
    </source>
</reference>
<organism>
    <name type="scientific">Bothrops erythromelas</name>
    <name type="common">Caatinga lance head</name>
    <dbReference type="NCBI Taxonomy" id="44710"/>
    <lineage>
        <taxon>Eukaryota</taxon>
        <taxon>Metazoa</taxon>
        <taxon>Chordata</taxon>
        <taxon>Craniata</taxon>
        <taxon>Vertebrata</taxon>
        <taxon>Euteleostomi</taxon>
        <taxon>Lepidosauria</taxon>
        <taxon>Squamata</taxon>
        <taxon>Bifurcata</taxon>
        <taxon>Unidentata</taxon>
        <taxon>Episquamata</taxon>
        <taxon>Toxicofera</taxon>
        <taxon>Serpentes</taxon>
        <taxon>Colubroidea</taxon>
        <taxon>Viperidae</taxon>
        <taxon>Crotalinae</taxon>
        <taxon>Bothrops</taxon>
    </lineage>
</organism>